<accession>Q8JYK0</accession>
<reference key="1">
    <citation type="journal article" date="2004" name="Arch. Virol.">
        <title>Molecular analysis of Fiji disease virus genome segments 5, 6, 8 and 10.</title>
        <authorList>
            <person name="McQualter R.B."/>
            <person name="Burns P."/>
            <person name="Smith G.R."/>
            <person name="Dale J.L."/>
            <person name="Harding R.M."/>
        </authorList>
    </citation>
    <scope>NUCLEOTIDE SEQUENCE [GENOMIC RNA]</scope>
</reference>
<proteinExistence type="predicted"/>
<protein>
    <recommendedName>
        <fullName>Uncharacterized protein VP5</fullName>
    </recommendedName>
</protein>
<dbReference type="EMBL" id="AY029521">
    <property type="protein sequence ID" value="AAK40250.1"/>
    <property type="molecule type" value="Genomic_RNA"/>
</dbReference>
<dbReference type="RefSeq" id="YP_249763.1">
    <property type="nucleotide sequence ID" value="NC_007160.1"/>
</dbReference>
<dbReference type="KEGG" id="vg:5075883"/>
<dbReference type="Proteomes" id="UP000001677">
    <property type="component" value="Genome"/>
</dbReference>
<gene>
    <name type="primary">S5</name>
</gene>
<feature type="chain" id="PRO_0000403396" description="Uncharacterized protein VP5">
    <location>
        <begin position="1"/>
        <end position="1002"/>
    </location>
</feature>
<sequence length="1002" mass="115299">MSEEEKIRIICNTNNEHRILKYEKDESNTRIITSIILHEIEDKSLIPAIDEMMENEVNAEIKTSISEFFDLVSNAFVAHYDEIVRKNNENANQNITDQNEIIEIKTQIPGLEKLHVRKVKFDQLMKIYSLNEEVAKKFPLLDVINGKFTVEQLKEGGLFDMTNVLPVLAEIFVITLSLGTVYGGAVFFILNWYTNYESYALILLQILHAIIQAIKRHVKPQKELISYVNKVKNFEAGQVEIIDPFFVFNKVNEKFEISKYRIEAVTHTNKPSIAKPLNEAFQQLINNIKVVKKISKPIKYIGYVKGFTNDTVIGMKGKKLPNIKRNVVGVYLDEKSSTLWVSHPLLCDAFELLHERNIGDGKKMSLDEIGKIPDDLVIFEIYDDEKLNSLILPFMESVDLKTNHQVSYGYKTKTNEQAHYKFVSEYGNMNFNDPIFSIFFPNHFIKVSYDVGIDVSVCELAGYNEMDTFTKLVTQQIESTASQMNLHEALNVIHNSHLDCGCYDNFGIFLNEYFTTGEVLEHIKETKVKPSDYHLNKMYVDMFTKRRPTELQHLLDKESKCMNLAYNPAFFDAEFDLVGDKNDHTLVVKFPRRKPYYRFLDENHGDASTLSLYEMVISCKNGKVSNATKVGFNVMSKSILPNPLLKKGGRGSPNVDKTRYFEYDLVFVTFSGDITQYLINDWIGENLSVYDESHSGVDLFKRSSVFQNGCFVKSADLHNEGLIELLRQPQNKLNLFMEGIVGAMCTDMEMPSFKSKMLQGIEALQCKKDNEVLVSGTSSSNQAYSFRNYIRSTRSGDVITRFERCIKIKSELHSPQKMCDNTDWFEFGRLGHLSFGTNLSEVIRSKHELLTSHPCGVRFRSFGYFRFGKSFKCKTCRNSYQNLFRFFHVWIGATIIQRVKSVSLVEVLSNLELNFMKLSQEHNKCSQYQFDLYDEHILNRILESKQDIIDVLLTSNDYNRLLNVISQIRISASELQHINGISKANLVIKIHLLSVIRSVCVD</sequence>
<organism>
    <name type="scientific">Fiji disease virus (isolate Sugarcane)</name>
    <name type="common">FDV</name>
    <dbReference type="NCBI Taxonomy" id="648172"/>
    <lineage>
        <taxon>Viruses</taxon>
        <taxon>Riboviria</taxon>
        <taxon>Orthornavirae</taxon>
        <taxon>Duplornaviricota</taxon>
        <taxon>Resentoviricetes</taxon>
        <taxon>Reovirales</taxon>
        <taxon>Spinareoviridae</taxon>
        <taxon>Fijivirus</taxon>
        <taxon>Fiji disease virus</taxon>
    </lineage>
</organism>
<organismHost>
    <name type="scientific">Saccharum officinarum</name>
    <name type="common">Sugarcane</name>
    <dbReference type="NCBI Taxonomy" id="4547"/>
</organismHost>
<name>VP5_FDVS</name>
<keyword id="KW-1185">Reference proteome</keyword>